<organism>
    <name type="scientific">Acidiphilium cryptum (strain JF-5)</name>
    <dbReference type="NCBI Taxonomy" id="349163"/>
    <lineage>
        <taxon>Bacteria</taxon>
        <taxon>Pseudomonadati</taxon>
        <taxon>Pseudomonadota</taxon>
        <taxon>Alphaproteobacteria</taxon>
        <taxon>Acetobacterales</taxon>
        <taxon>Acidocellaceae</taxon>
        <taxon>Acidiphilium</taxon>
    </lineage>
</organism>
<sequence>MAISHRGFTITRVPMLADNYAWLVAHGGASAFVDPADAAAAIEAVEAAGGRLDWVLLTHHHDDHIAGAVDLAARFGARIAGNAADAARLPRLDAALAPGQTIDLGGEAVRMIATPGHTVGHVTYLFGDAAAACGDTLFSLGCGRMFEGTPAQFHASLQALAALDPETLMLCGHEYTLSNARFARHVDPDNAALAARAAEAERLRAAGAPTLPVRLADELAANPFLRAASAEEFARLRAAKDKF</sequence>
<evidence type="ECO:0000255" key="1">
    <source>
        <dbReference type="HAMAP-Rule" id="MF_01374"/>
    </source>
</evidence>
<comment type="function">
    <text evidence="1">Thiolesterase that catalyzes the hydrolysis of S-D-lactoyl-glutathione to form glutathione and D-lactic acid.</text>
</comment>
<comment type="catalytic activity">
    <reaction evidence="1">
        <text>an S-(2-hydroxyacyl)glutathione + H2O = a 2-hydroxy carboxylate + glutathione + H(+)</text>
        <dbReference type="Rhea" id="RHEA:21864"/>
        <dbReference type="ChEBI" id="CHEBI:15377"/>
        <dbReference type="ChEBI" id="CHEBI:15378"/>
        <dbReference type="ChEBI" id="CHEBI:57925"/>
        <dbReference type="ChEBI" id="CHEBI:58896"/>
        <dbReference type="ChEBI" id="CHEBI:71261"/>
        <dbReference type="EC" id="3.1.2.6"/>
    </reaction>
</comment>
<comment type="cofactor">
    <cofactor evidence="1">
        <name>Zn(2+)</name>
        <dbReference type="ChEBI" id="CHEBI:29105"/>
    </cofactor>
    <text evidence="1">Binds 2 Zn(2+) ions per subunit.</text>
</comment>
<comment type="pathway">
    <text evidence="1">Secondary metabolite metabolism; methylglyoxal degradation; (R)-lactate from methylglyoxal: step 2/2.</text>
</comment>
<comment type="subunit">
    <text evidence="1">Monomer.</text>
</comment>
<comment type="similarity">
    <text evidence="1">Belongs to the metallo-beta-lactamase superfamily. Glyoxalase II family.</text>
</comment>
<accession>A5FZE9</accession>
<feature type="chain" id="PRO_1000144747" description="Hydroxyacylglutathione hydrolase">
    <location>
        <begin position="1"/>
        <end position="243"/>
    </location>
</feature>
<feature type="binding site" evidence="1">
    <location>
        <position position="59"/>
    </location>
    <ligand>
        <name>Zn(2+)</name>
        <dbReference type="ChEBI" id="CHEBI:29105"/>
        <label>1</label>
    </ligand>
</feature>
<feature type="binding site" evidence="1">
    <location>
        <position position="61"/>
    </location>
    <ligand>
        <name>Zn(2+)</name>
        <dbReference type="ChEBI" id="CHEBI:29105"/>
        <label>1</label>
    </ligand>
</feature>
<feature type="binding site" evidence="1">
    <location>
        <position position="63"/>
    </location>
    <ligand>
        <name>Zn(2+)</name>
        <dbReference type="ChEBI" id="CHEBI:29105"/>
        <label>2</label>
    </ligand>
</feature>
<feature type="binding site" evidence="1">
    <location>
        <position position="64"/>
    </location>
    <ligand>
        <name>Zn(2+)</name>
        <dbReference type="ChEBI" id="CHEBI:29105"/>
        <label>2</label>
    </ligand>
</feature>
<feature type="binding site" evidence="1">
    <location>
        <position position="117"/>
    </location>
    <ligand>
        <name>Zn(2+)</name>
        <dbReference type="ChEBI" id="CHEBI:29105"/>
        <label>1</label>
    </ligand>
</feature>
<feature type="binding site" evidence="1">
    <location>
        <position position="135"/>
    </location>
    <ligand>
        <name>Zn(2+)</name>
        <dbReference type="ChEBI" id="CHEBI:29105"/>
        <label>1</label>
    </ligand>
</feature>
<feature type="binding site" evidence="1">
    <location>
        <position position="135"/>
    </location>
    <ligand>
        <name>Zn(2+)</name>
        <dbReference type="ChEBI" id="CHEBI:29105"/>
        <label>2</label>
    </ligand>
</feature>
<feature type="binding site" evidence="1">
    <location>
        <position position="173"/>
    </location>
    <ligand>
        <name>Zn(2+)</name>
        <dbReference type="ChEBI" id="CHEBI:29105"/>
        <label>2</label>
    </ligand>
</feature>
<proteinExistence type="inferred from homology"/>
<gene>
    <name evidence="1" type="primary">gloB</name>
    <name type="ordered locus">Acry_1778</name>
</gene>
<reference key="1">
    <citation type="submission" date="2007-05" db="EMBL/GenBank/DDBJ databases">
        <title>Complete sequence of chromosome of Acidiphilium cryptum JF-5.</title>
        <authorList>
            <consortium name="US DOE Joint Genome Institute"/>
            <person name="Copeland A."/>
            <person name="Lucas S."/>
            <person name="Lapidus A."/>
            <person name="Barry K."/>
            <person name="Detter J.C."/>
            <person name="Glavina del Rio T."/>
            <person name="Hammon N."/>
            <person name="Israni S."/>
            <person name="Dalin E."/>
            <person name="Tice H."/>
            <person name="Pitluck S."/>
            <person name="Sims D."/>
            <person name="Brettin T."/>
            <person name="Bruce D."/>
            <person name="Han C."/>
            <person name="Schmutz J."/>
            <person name="Larimer F."/>
            <person name="Land M."/>
            <person name="Hauser L."/>
            <person name="Kyrpides N."/>
            <person name="Kim E."/>
            <person name="Magnuson T."/>
            <person name="Richardson P."/>
        </authorList>
    </citation>
    <scope>NUCLEOTIDE SEQUENCE [LARGE SCALE GENOMIC DNA]</scope>
    <source>
        <strain>JF-5</strain>
    </source>
</reference>
<keyword id="KW-0378">Hydrolase</keyword>
<keyword id="KW-0479">Metal-binding</keyword>
<keyword id="KW-1185">Reference proteome</keyword>
<keyword id="KW-0862">Zinc</keyword>
<name>GLO2_ACICJ</name>
<protein>
    <recommendedName>
        <fullName evidence="1">Hydroxyacylglutathione hydrolase</fullName>
        <ecNumber evidence="1">3.1.2.6</ecNumber>
    </recommendedName>
    <alternativeName>
        <fullName evidence="1">Glyoxalase II</fullName>
        <shortName evidence="1">Glx II</shortName>
    </alternativeName>
</protein>
<dbReference type="EC" id="3.1.2.6" evidence="1"/>
<dbReference type="EMBL" id="CP000697">
    <property type="protein sequence ID" value="ABQ30981.1"/>
    <property type="molecule type" value="Genomic_DNA"/>
</dbReference>
<dbReference type="RefSeq" id="WP_011942480.1">
    <property type="nucleotide sequence ID" value="NC_009484.1"/>
</dbReference>
<dbReference type="SMR" id="A5FZE9"/>
<dbReference type="STRING" id="349163.Acry_1778"/>
<dbReference type="KEGG" id="acr:Acry_1778"/>
<dbReference type="eggNOG" id="COG0491">
    <property type="taxonomic scope" value="Bacteria"/>
</dbReference>
<dbReference type="HOGENOM" id="CLU_030571_4_1_5"/>
<dbReference type="UniPathway" id="UPA00619">
    <property type="reaction ID" value="UER00676"/>
</dbReference>
<dbReference type="Proteomes" id="UP000000245">
    <property type="component" value="Chromosome"/>
</dbReference>
<dbReference type="GO" id="GO:0004416">
    <property type="term" value="F:hydroxyacylglutathione hydrolase activity"/>
    <property type="evidence" value="ECO:0007669"/>
    <property type="project" value="UniProtKB-UniRule"/>
</dbReference>
<dbReference type="GO" id="GO:0046872">
    <property type="term" value="F:metal ion binding"/>
    <property type="evidence" value="ECO:0007669"/>
    <property type="project" value="UniProtKB-KW"/>
</dbReference>
<dbReference type="GO" id="GO:0019243">
    <property type="term" value="P:methylglyoxal catabolic process to D-lactate via S-lactoyl-glutathione"/>
    <property type="evidence" value="ECO:0007669"/>
    <property type="project" value="InterPro"/>
</dbReference>
<dbReference type="CDD" id="cd07723">
    <property type="entry name" value="hydroxyacylglutathione_hydrolase_MBL-fold"/>
    <property type="match status" value="1"/>
</dbReference>
<dbReference type="Gene3D" id="3.60.15.10">
    <property type="entry name" value="Ribonuclease Z/Hydroxyacylglutathione hydrolase-like"/>
    <property type="match status" value="1"/>
</dbReference>
<dbReference type="HAMAP" id="MF_01374">
    <property type="entry name" value="Glyoxalase_2"/>
    <property type="match status" value="1"/>
</dbReference>
<dbReference type="InterPro" id="IPR035680">
    <property type="entry name" value="Clx_II_MBL"/>
</dbReference>
<dbReference type="InterPro" id="IPR050110">
    <property type="entry name" value="Glyoxalase_II_hydrolase"/>
</dbReference>
<dbReference type="InterPro" id="IPR032282">
    <property type="entry name" value="HAGH_C"/>
</dbReference>
<dbReference type="InterPro" id="IPR017782">
    <property type="entry name" value="Hydroxyacylglutathione_Hdrlase"/>
</dbReference>
<dbReference type="InterPro" id="IPR001279">
    <property type="entry name" value="Metallo-B-lactamas"/>
</dbReference>
<dbReference type="InterPro" id="IPR036866">
    <property type="entry name" value="RibonucZ/Hydroxyglut_hydro"/>
</dbReference>
<dbReference type="NCBIfam" id="TIGR03413">
    <property type="entry name" value="GSH_gloB"/>
    <property type="match status" value="1"/>
</dbReference>
<dbReference type="PANTHER" id="PTHR43705">
    <property type="entry name" value="HYDROXYACYLGLUTATHIONE HYDROLASE"/>
    <property type="match status" value="1"/>
</dbReference>
<dbReference type="PANTHER" id="PTHR43705:SF1">
    <property type="entry name" value="HYDROXYACYLGLUTATHIONE HYDROLASE GLOB"/>
    <property type="match status" value="1"/>
</dbReference>
<dbReference type="Pfam" id="PF16123">
    <property type="entry name" value="HAGH_C"/>
    <property type="match status" value="1"/>
</dbReference>
<dbReference type="Pfam" id="PF00753">
    <property type="entry name" value="Lactamase_B"/>
    <property type="match status" value="1"/>
</dbReference>
<dbReference type="PIRSF" id="PIRSF005457">
    <property type="entry name" value="Glx"/>
    <property type="match status" value="1"/>
</dbReference>
<dbReference type="SMART" id="SM00849">
    <property type="entry name" value="Lactamase_B"/>
    <property type="match status" value="1"/>
</dbReference>
<dbReference type="SUPFAM" id="SSF56281">
    <property type="entry name" value="Metallo-hydrolase/oxidoreductase"/>
    <property type="match status" value="1"/>
</dbReference>